<organism>
    <name type="scientific">Streptococcus pneumoniae serotype 4 (strain ATCC BAA-334 / TIGR4)</name>
    <dbReference type="NCBI Taxonomy" id="170187"/>
    <lineage>
        <taxon>Bacteria</taxon>
        <taxon>Bacillati</taxon>
        <taxon>Bacillota</taxon>
        <taxon>Bacilli</taxon>
        <taxon>Lactobacillales</taxon>
        <taxon>Streptococcaceae</taxon>
        <taxon>Streptococcus</taxon>
    </lineage>
</organism>
<protein>
    <recommendedName>
        <fullName evidence="1">ATP-dependent Clp protease proteolytic subunit</fullName>
        <ecNumber evidence="1">3.4.21.92</ecNumber>
    </recommendedName>
    <alternativeName>
        <fullName evidence="1">Endopeptidase Clp</fullName>
    </alternativeName>
</protein>
<gene>
    <name evidence="1" type="primary">clpP</name>
    <name type="ordered locus">SP_0746</name>
</gene>
<feature type="chain" id="PRO_0000179670" description="ATP-dependent Clp protease proteolytic subunit">
    <location>
        <begin position="1"/>
        <end position="196"/>
    </location>
</feature>
<feature type="active site" description="Nucleophile" evidence="1">
    <location>
        <position position="96"/>
    </location>
</feature>
<feature type="active site" evidence="1">
    <location>
        <position position="121"/>
    </location>
</feature>
<evidence type="ECO:0000255" key="1">
    <source>
        <dbReference type="HAMAP-Rule" id="MF_00444"/>
    </source>
</evidence>
<accession>P63787</accession>
<accession>P58279</accession>
<reference key="1">
    <citation type="journal article" date="2001" name="Science">
        <title>Complete genome sequence of a virulent isolate of Streptococcus pneumoniae.</title>
        <authorList>
            <person name="Tettelin H."/>
            <person name="Nelson K.E."/>
            <person name="Paulsen I.T."/>
            <person name="Eisen J.A."/>
            <person name="Read T.D."/>
            <person name="Peterson S.N."/>
            <person name="Heidelberg J.F."/>
            <person name="DeBoy R.T."/>
            <person name="Haft D.H."/>
            <person name="Dodson R.J."/>
            <person name="Durkin A.S."/>
            <person name="Gwinn M.L."/>
            <person name="Kolonay J.F."/>
            <person name="Nelson W.C."/>
            <person name="Peterson J.D."/>
            <person name="Umayam L.A."/>
            <person name="White O."/>
            <person name="Salzberg S.L."/>
            <person name="Lewis M.R."/>
            <person name="Radune D."/>
            <person name="Holtzapple E.K."/>
            <person name="Khouri H.M."/>
            <person name="Wolf A.M."/>
            <person name="Utterback T.R."/>
            <person name="Hansen C.L."/>
            <person name="McDonald L.A."/>
            <person name="Feldblyum T.V."/>
            <person name="Angiuoli S.V."/>
            <person name="Dickinson T."/>
            <person name="Hickey E.K."/>
            <person name="Holt I.E."/>
            <person name="Loftus B.J."/>
            <person name="Yang F."/>
            <person name="Smith H.O."/>
            <person name="Venter J.C."/>
            <person name="Dougherty B.A."/>
            <person name="Morrison D.A."/>
            <person name="Hollingshead S.K."/>
            <person name="Fraser C.M."/>
        </authorList>
    </citation>
    <scope>NUCLEOTIDE SEQUENCE [LARGE SCALE GENOMIC DNA]</scope>
    <source>
        <strain>ATCC BAA-334 / TIGR4</strain>
    </source>
</reference>
<dbReference type="EC" id="3.4.21.92" evidence="1"/>
<dbReference type="EMBL" id="AE005672">
    <property type="protein sequence ID" value="AAK74885.1"/>
    <property type="molecule type" value="Genomic_DNA"/>
</dbReference>
<dbReference type="PIR" id="D95086">
    <property type="entry name" value="D95086"/>
</dbReference>
<dbReference type="RefSeq" id="WP_000613477.1">
    <property type="nucleotide sequence ID" value="NZ_CP155539.1"/>
</dbReference>
<dbReference type="SMR" id="P63787"/>
<dbReference type="MEROPS" id="S14.001"/>
<dbReference type="PaxDb" id="170187-SP_0746"/>
<dbReference type="EnsemblBacteria" id="AAK74885">
    <property type="protein sequence ID" value="AAK74885"/>
    <property type="gene ID" value="SP_0746"/>
</dbReference>
<dbReference type="KEGG" id="spn:SP_0746"/>
<dbReference type="eggNOG" id="COG0740">
    <property type="taxonomic scope" value="Bacteria"/>
</dbReference>
<dbReference type="PhylomeDB" id="P63787"/>
<dbReference type="BioCyc" id="SPNE170187:G1FZB-762-MONOMER"/>
<dbReference type="BRENDA" id="3.4.21.92">
    <property type="organism ID" value="9553"/>
</dbReference>
<dbReference type="Proteomes" id="UP000000585">
    <property type="component" value="Chromosome"/>
</dbReference>
<dbReference type="GO" id="GO:0005737">
    <property type="term" value="C:cytoplasm"/>
    <property type="evidence" value="ECO:0007669"/>
    <property type="project" value="UniProtKB-SubCell"/>
</dbReference>
<dbReference type="GO" id="GO:0009368">
    <property type="term" value="C:endopeptidase Clp complex"/>
    <property type="evidence" value="ECO:0007669"/>
    <property type="project" value="TreeGrafter"/>
</dbReference>
<dbReference type="GO" id="GO:0004176">
    <property type="term" value="F:ATP-dependent peptidase activity"/>
    <property type="evidence" value="ECO:0007669"/>
    <property type="project" value="InterPro"/>
</dbReference>
<dbReference type="GO" id="GO:0051117">
    <property type="term" value="F:ATPase binding"/>
    <property type="evidence" value="ECO:0007669"/>
    <property type="project" value="TreeGrafter"/>
</dbReference>
<dbReference type="GO" id="GO:0004252">
    <property type="term" value="F:serine-type endopeptidase activity"/>
    <property type="evidence" value="ECO:0007669"/>
    <property type="project" value="UniProtKB-UniRule"/>
</dbReference>
<dbReference type="GO" id="GO:0006515">
    <property type="term" value="P:protein quality control for misfolded or incompletely synthesized proteins"/>
    <property type="evidence" value="ECO:0007669"/>
    <property type="project" value="TreeGrafter"/>
</dbReference>
<dbReference type="CDD" id="cd07017">
    <property type="entry name" value="S14_ClpP_2"/>
    <property type="match status" value="1"/>
</dbReference>
<dbReference type="FunFam" id="3.90.226.10:FF:000014">
    <property type="entry name" value="ATP-dependent Clp protease proteolytic subunit"/>
    <property type="match status" value="1"/>
</dbReference>
<dbReference type="Gene3D" id="3.90.226.10">
    <property type="entry name" value="2-enoyl-CoA Hydratase, Chain A, domain 1"/>
    <property type="match status" value="1"/>
</dbReference>
<dbReference type="HAMAP" id="MF_00444">
    <property type="entry name" value="ClpP"/>
    <property type="match status" value="1"/>
</dbReference>
<dbReference type="InterPro" id="IPR001907">
    <property type="entry name" value="ClpP"/>
</dbReference>
<dbReference type="InterPro" id="IPR029045">
    <property type="entry name" value="ClpP/crotonase-like_dom_sf"/>
</dbReference>
<dbReference type="InterPro" id="IPR023562">
    <property type="entry name" value="ClpP/TepA"/>
</dbReference>
<dbReference type="InterPro" id="IPR033135">
    <property type="entry name" value="ClpP_His_AS"/>
</dbReference>
<dbReference type="InterPro" id="IPR018215">
    <property type="entry name" value="ClpP_Ser_AS"/>
</dbReference>
<dbReference type="NCBIfam" id="NF001368">
    <property type="entry name" value="PRK00277.1"/>
    <property type="match status" value="1"/>
</dbReference>
<dbReference type="NCBIfam" id="NF009205">
    <property type="entry name" value="PRK12553.1"/>
    <property type="match status" value="1"/>
</dbReference>
<dbReference type="PANTHER" id="PTHR10381">
    <property type="entry name" value="ATP-DEPENDENT CLP PROTEASE PROTEOLYTIC SUBUNIT"/>
    <property type="match status" value="1"/>
</dbReference>
<dbReference type="PANTHER" id="PTHR10381:SF70">
    <property type="entry name" value="ATP-DEPENDENT CLP PROTEASE PROTEOLYTIC SUBUNIT"/>
    <property type="match status" value="1"/>
</dbReference>
<dbReference type="Pfam" id="PF00574">
    <property type="entry name" value="CLP_protease"/>
    <property type="match status" value="1"/>
</dbReference>
<dbReference type="PRINTS" id="PR00127">
    <property type="entry name" value="CLPPROTEASEP"/>
</dbReference>
<dbReference type="SUPFAM" id="SSF52096">
    <property type="entry name" value="ClpP/crotonase"/>
    <property type="match status" value="1"/>
</dbReference>
<dbReference type="PROSITE" id="PS00382">
    <property type="entry name" value="CLP_PROTEASE_HIS"/>
    <property type="match status" value="1"/>
</dbReference>
<dbReference type="PROSITE" id="PS00381">
    <property type="entry name" value="CLP_PROTEASE_SER"/>
    <property type="match status" value="1"/>
</dbReference>
<sequence length="196" mass="21358">MIPVVIEQTSRGERSYDIYSRLLKDRIIMLTGPVEDNMANSVIAQLLFLDAQDSTKDIYLYVNTPGGSVSAGLAIVDTMNFIKADVQTIVMGMAASMGTVIASSGAKGKRFMLPNAEYMIHQPMGGTGGGTQQTDMAIAAEHLLKTRNTLEKILAENSGQSMEKVHADAERDNWMSAQETLEYGFIDEIMANNSLN</sequence>
<name>CLPP_STRPN</name>
<comment type="function">
    <text evidence="1">Cleaves peptides in various proteins in a process that requires ATP hydrolysis. Has a chymotrypsin-like activity. Plays a major role in the degradation of misfolded proteins.</text>
</comment>
<comment type="catalytic activity">
    <reaction evidence="1">
        <text>Hydrolysis of proteins to small peptides in the presence of ATP and magnesium. alpha-casein is the usual test substrate. In the absence of ATP, only oligopeptides shorter than five residues are hydrolyzed (such as succinyl-Leu-Tyr-|-NHMec, and Leu-Tyr-Leu-|-Tyr-Trp, in which cleavage of the -Tyr-|-Leu- and -Tyr-|-Trp bonds also occurs).</text>
        <dbReference type="EC" id="3.4.21.92"/>
    </reaction>
</comment>
<comment type="subunit">
    <text evidence="1">Fourteen ClpP subunits assemble into 2 heptameric rings which stack back to back to give a disk-like structure with a central cavity, resembling the structure of eukaryotic proteasomes.</text>
</comment>
<comment type="subcellular location">
    <subcellularLocation>
        <location evidence="1">Cytoplasm</location>
    </subcellularLocation>
</comment>
<comment type="similarity">
    <text evidence="1">Belongs to the peptidase S14 family.</text>
</comment>
<keyword id="KW-0963">Cytoplasm</keyword>
<keyword id="KW-0378">Hydrolase</keyword>
<keyword id="KW-0645">Protease</keyword>
<keyword id="KW-1185">Reference proteome</keyword>
<keyword id="KW-0720">Serine protease</keyword>
<proteinExistence type="inferred from homology"/>